<evidence type="ECO:0000269" key="1">
    <source>
    </source>
</evidence>
<evidence type="ECO:0000305" key="2"/>
<evidence type="ECO:0007829" key="3">
    <source>
        <dbReference type="PDB" id="1R7M"/>
    </source>
</evidence>
<evidence type="ECO:0007829" key="4">
    <source>
        <dbReference type="PDB" id="3C0W"/>
    </source>
</evidence>
<evidence type="ECO:0007829" key="5">
    <source>
        <dbReference type="PDB" id="3C0X"/>
    </source>
</evidence>
<evidence type="ECO:0007829" key="6">
    <source>
        <dbReference type="PDB" id="3OOR"/>
    </source>
</evidence>
<name>SCE1_YEAST</name>
<keyword id="KW-0002">3D-structure</keyword>
<keyword id="KW-0255">Endonuclease</keyword>
<keyword id="KW-0378">Hydrolase</keyword>
<keyword id="KW-0404">Intron homing</keyword>
<keyword id="KW-0496">Mitochondrion</keyword>
<keyword id="KW-0507">mRNA processing</keyword>
<keyword id="KW-0508">mRNA splicing</keyword>
<keyword id="KW-0540">Nuclease</keyword>
<keyword id="KW-1185">Reference proteome</keyword>
<organism>
    <name type="scientific">Saccharomyces cerevisiae (strain ATCC 204508 / S288c)</name>
    <name type="common">Baker's yeast</name>
    <dbReference type="NCBI Taxonomy" id="559292"/>
    <lineage>
        <taxon>Eukaryota</taxon>
        <taxon>Fungi</taxon>
        <taxon>Dikarya</taxon>
        <taxon>Ascomycota</taxon>
        <taxon>Saccharomycotina</taxon>
        <taxon>Saccharomycetes</taxon>
        <taxon>Saccharomycetales</taxon>
        <taxon>Saccharomycetaceae</taxon>
        <taxon>Saccharomyces</taxon>
    </lineage>
</organism>
<comment type="function">
    <text evidence="1">Mitochondrial DNA endonuclease involved in intron homing. It introduces a specific double-strand break in the DNA of the 21S rRNA gene and thus mediates the insertion of an intron, containing its own coding sequence (group I intron), into an intronless gene. Specifically recognizes and cleaves the sequence 5'-TAGGGATAACAGGGTAAT-3'.</text>
</comment>
<comment type="cofactor">
    <cofactor evidence="1">
        <name>Mg(2+)</name>
        <dbReference type="ChEBI" id="CHEBI:18420"/>
    </cofactor>
</comment>
<comment type="biophysicochemical properties">
    <phDependence>
        <text evidence="1">Optimum pH is 9-10.</text>
    </phDependence>
</comment>
<comment type="subunit">
    <text evidence="1">Monomer.</text>
</comment>
<comment type="subcellular location">
    <subcellularLocation>
        <location>Mitochondrion</location>
    </subcellularLocation>
</comment>
<comment type="similarity">
    <text evidence="2">Belongs to the LAGLIDADG endonuclease family.</text>
</comment>
<accession>P03882</accession>
<accession>A0A0A7NYJ1</accession>
<feature type="chain" id="PRO_0000192785" description="Intron-encoded endonuclease I-SceI">
    <location>
        <begin position="1"/>
        <end position="235"/>
    </location>
</feature>
<feature type="helix" evidence="4">
    <location>
        <begin position="6"/>
        <end position="9"/>
    </location>
</feature>
<feature type="strand" evidence="6">
    <location>
        <begin position="10"/>
        <end position="12"/>
    </location>
</feature>
<feature type="helix" evidence="4">
    <location>
        <begin position="17"/>
        <end position="24"/>
    </location>
</feature>
<feature type="helix" evidence="4">
    <location>
        <begin position="31"/>
        <end position="42"/>
    </location>
</feature>
<feature type="strand" evidence="4">
    <location>
        <begin position="46"/>
        <end position="48"/>
    </location>
</feature>
<feature type="strand" evidence="3">
    <location>
        <begin position="50"/>
        <end position="54"/>
    </location>
</feature>
<feature type="strand" evidence="4">
    <location>
        <begin position="56"/>
        <end position="63"/>
    </location>
</feature>
<feature type="helix" evidence="4">
    <location>
        <begin position="65"/>
        <end position="74"/>
    </location>
</feature>
<feature type="helix" evidence="4">
    <location>
        <begin position="76"/>
        <end position="78"/>
    </location>
</feature>
<feature type="strand" evidence="4">
    <location>
        <begin position="84"/>
        <end position="89"/>
    </location>
</feature>
<feature type="strand" evidence="5">
    <location>
        <begin position="91"/>
        <end position="93"/>
    </location>
</feature>
<feature type="strand" evidence="4">
    <location>
        <begin position="95"/>
        <end position="102"/>
    </location>
</feature>
<feature type="helix" evidence="4">
    <location>
        <begin position="107"/>
        <end position="109"/>
    </location>
</feature>
<feature type="helix" evidence="4">
    <location>
        <begin position="110"/>
        <end position="114"/>
    </location>
</feature>
<feature type="strand" evidence="4">
    <location>
        <begin position="117"/>
        <end position="122"/>
    </location>
</feature>
<feature type="helix" evidence="4">
    <location>
        <begin position="128"/>
        <end position="132"/>
    </location>
</feature>
<feature type="helix" evidence="4">
    <location>
        <begin position="135"/>
        <end position="145"/>
    </location>
</feature>
<feature type="strand" evidence="4">
    <location>
        <begin position="146"/>
        <end position="149"/>
    </location>
</feature>
<feature type="strand" evidence="6">
    <location>
        <begin position="152"/>
        <end position="154"/>
    </location>
</feature>
<feature type="strand" evidence="4">
    <location>
        <begin position="160"/>
        <end position="162"/>
    </location>
</feature>
<feature type="helix" evidence="4">
    <location>
        <begin position="169"/>
        <end position="183"/>
    </location>
</feature>
<feature type="strand" evidence="4">
    <location>
        <begin position="187"/>
        <end position="192"/>
    </location>
</feature>
<feature type="strand" evidence="4">
    <location>
        <begin position="195"/>
        <end position="200"/>
    </location>
</feature>
<feature type="helix" evidence="4">
    <location>
        <begin position="202"/>
        <end position="204"/>
    </location>
</feature>
<feature type="helix" evidence="4">
    <location>
        <begin position="205"/>
        <end position="212"/>
    </location>
</feature>
<feature type="helix" evidence="4">
    <location>
        <begin position="213"/>
        <end position="215"/>
    </location>
</feature>
<feature type="helix" evidence="4">
    <location>
        <begin position="218"/>
        <end position="223"/>
    </location>
</feature>
<proteinExistence type="evidence at protein level"/>
<reference key="1">
    <citation type="journal article" date="1980" name="Cell">
        <title>Sequence of the intron and flanking exons of the mitochondrial 21S rRNA gene of yeast strains having different alleles at the omega and rib-1 loci.</title>
        <authorList>
            <person name="Dujon B."/>
        </authorList>
    </citation>
    <scope>NUCLEOTIDE SEQUENCE [GENOMIC DNA]</scope>
    <source>
        <strain>IL8-8C/R53</strain>
    </source>
</reference>
<reference key="2">
    <citation type="journal article" date="1985" name="Cell">
        <title>An intron-encoded protein is active in a gene conversion process that spreads an intron into a mitochondrial gene.</title>
        <authorList>
            <person name="Jacquier A."/>
            <person name="Dujon B."/>
        </authorList>
    </citation>
    <scope>NUCLEOTIDE SEQUENCE [GENOMIC DNA]</scope>
    <scope>INTRON HOMING</scope>
</reference>
<reference key="3">
    <citation type="journal article" date="1998" name="FEBS Lett.">
        <title>The complete sequence of the mitochondrial genome of Saccharomyces cerevisiae.</title>
        <authorList>
            <person name="Foury F."/>
            <person name="Roganti T."/>
            <person name="Lecrenier N."/>
            <person name="Purnelle B."/>
        </authorList>
    </citation>
    <scope>NUCLEOTIDE SEQUENCE [LARGE SCALE GENOMIC DNA]</scope>
    <source>
        <strain>ATCC 96604 / S288c / FY1679</strain>
    </source>
</reference>
<reference key="4">
    <citation type="journal article" date="2014" name="G3 (Bethesda)">
        <title>The reference genome sequence of Saccharomyces cerevisiae: Then and now.</title>
        <authorList>
            <person name="Engel S.R."/>
            <person name="Dietrich F.S."/>
            <person name="Fisk D.G."/>
            <person name="Binkley G."/>
            <person name="Balakrishnan R."/>
            <person name="Costanzo M.C."/>
            <person name="Dwight S.S."/>
            <person name="Hitz B.C."/>
            <person name="Karra K."/>
            <person name="Nash R.S."/>
            <person name="Weng S."/>
            <person name="Wong E.D."/>
            <person name="Lloyd P."/>
            <person name="Skrzypek M.S."/>
            <person name="Miyasato S.R."/>
            <person name="Simison M."/>
            <person name="Cherry J.M."/>
        </authorList>
    </citation>
    <scope>GENOME REANNOTATION</scope>
    <source>
        <strain>ATCC 96604 / S288c / FY1679</strain>
    </source>
</reference>
<reference key="5">
    <citation type="journal article" date="1990" name="Nucleic Acids Res.">
        <title>Purification and characterization of the in vitro activity of I-Sce I, a novel and highly specific endonuclease encoded by a group I intron.</title>
        <authorList>
            <person name="Monteilhet C."/>
            <person name="Perrin A."/>
            <person name="Thierry A."/>
            <person name="Colleaux L."/>
            <person name="Dujon B."/>
        </authorList>
    </citation>
    <scope>FUNCTION</scope>
    <scope>ENDONUCLEASE ACTIVITY</scope>
    <scope>COFACTOR</scope>
    <scope>PH OPTIMUM</scope>
    <scope>CLEAVAGE SITE SPECIFICITY</scope>
    <scope>SUBUNIT</scope>
</reference>
<reference key="6">
    <citation type="journal article" date="2003" name="J. Mol. Biol.">
        <title>The crystal structure of the gene targeting homing endonuclease I-SceI reveals the origins of its target site specificity.</title>
        <authorList>
            <person name="Moure C.M."/>
            <person name="Gimble F.S."/>
            <person name="Quiocho F.A."/>
        </authorList>
    </citation>
    <scope>X-RAY CRYSTALLOGRAPHY (2.25 ANGSTROMS)</scope>
</reference>
<dbReference type="EC" id="3.1.-.-"/>
<dbReference type="EMBL" id="M11280">
    <property type="protein sequence ID" value="AAA32168.2"/>
    <property type="molecule type" value="Genomic_DNA"/>
</dbReference>
<dbReference type="EMBL" id="V00684">
    <property type="protein sequence ID" value="CAA24055.1"/>
    <property type="molecule type" value="Genomic_DNA"/>
</dbReference>
<dbReference type="EMBL" id="KP263414">
    <property type="protein sequence ID" value="AIZ98896.1"/>
    <property type="molecule type" value="Genomic_DNA"/>
</dbReference>
<dbReference type="PIR" id="A23170">
    <property type="entry name" value="QQBY1M"/>
</dbReference>
<dbReference type="RefSeq" id="NP_009324.1">
    <property type="nucleotide sequence ID" value="NC_001224.1"/>
</dbReference>
<dbReference type="PDB" id="1R7M">
    <property type="method" value="X-ray"/>
    <property type="resolution" value="2.25 A"/>
    <property type="chains" value="A/B=1-235"/>
</dbReference>
<dbReference type="PDB" id="3C0W">
    <property type="method" value="X-ray"/>
    <property type="resolution" value="2.20 A"/>
    <property type="chains" value="A=1-235"/>
</dbReference>
<dbReference type="PDB" id="3C0X">
    <property type="method" value="X-ray"/>
    <property type="resolution" value="2.30 A"/>
    <property type="chains" value="A=1-235"/>
</dbReference>
<dbReference type="PDB" id="3OOL">
    <property type="method" value="X-ray"/>
    <property type="resolution" value="2.30 A"/>
    <property type="chains" value="A=1-235"/>
</dbReference>
<dbReference type="PDB" id="3OOR">
    <property type="method" value="X-ray"/>
    <property type="resolution" value="2.50 A"/>
    <property type="chains" value="A=1-235"/>
</dbReference>
<dbReference type="PDB" id="5A0M">
    <property type="method" value="X-ray"/>
    <property type="resolution" value="2.90 A"/>
    <property type="chains" value="A/B=1-235"/>
</dbReference>
<dbReference type="PDBsum" id="1R7M"/>
<dbReference type="PDBsum" id="3C0W"/>
<dbReference type="PDBsum" id="3C0X"/>
<dbReference type="PDBsum" id="3OOL"/>
<dbReference type="PDBsum" id="3OOR"/>
<dbReference type="PDBsum" id="5A0M"/>
<dbReference type="SMR" id="P03882"/>
<dbReference type="BioGRID" id="34783">
    <property type="interactions" value="4"/>
</dbReference>
<dbReference type="FunCoup" id="P03882">
    <property type="interactions" value="9"/>
</dbReference>
<dbReference type="IntAct" id="P03882">
    <property type="interactions" value="1"/>
</dbReference>
<dbReference type="STRING" id="4932.Q0160"/>
<dbReference type="REBASE" id="2594">
    <property type="entry name" value="I-SceI"/>
</dbReference>
<dbReference type="PaxDb" id="4932-Q0160"/>
<dbReference type="PeptideAtlas" id="P03882"/>
<dbReference type="EnsemblFungi" id="Q0160_mRNA">
    <property type="protein sequence ID" value="Q0160"/>
    <property type="gene ID" value="Q0160"/>
</dbReference>
<dbReference type="GeneID" id="854590"/>
<dbReference type="KEGG" id="sce:Q0160"/>
<dbReference type="AGR" id="SGD:S000007279"/>
<dbReference type="SGD" id="S000007279">
    <property type="gene designation" value="SCEI"/>
</dbReference>
<dbReference type="VEuPathDB" id="FungiDB:Q0160"/>
<dbReference type="eggNOG" id="ENOG502TAHD">
    <property type="taxonomic scope" value="Eukaryota"/>
</dbReference>
<dbReference type="HOGENOM" id="CLU_1355297_0_0_1"/>
<dbReference type="InParanoid" id="P03882"/>
<dbReference type="OMA" id="LAWWYQD"/>
<dbReference type="OrthoDB" id="2888667at2759"/>
<dbReference type="BioCyc" id="YEAST:G3O-34385-MONOMER"/>
<dbReference type="BioGRID-ORCS" id="854590">
    <property type="hits" value="0 hits in 10 CRISPR screens"/>
</dbReference>
<dbReference type="EvolutionaryTrace" id="P03882"/>
<dbReference type="PRO" id="PR:P03882"/>
<dbReference type="Proteomes" id="UP000002311">
    <property type="component" value="Mitochondrion"/>
</dbReference>
<dbReference type="RNAct" id="P03882">
    <property type="molecule type" value="protein"/>
</dbReference>
<dbReference type="GO" id="GO:0005739">
    <property type="term" value="C:mitochondrion"/>
    <property type="evidence" value="ECO:0000304"/>
    <property type="project" value="SGD"/>
</dbReference>
<dbReference type="GO" id="GO:0004519">
    <property type="term" value="F:endonuclease activity"/>
    <property type="evidence" value="ECO:0000314"/>
    <property type="project" value="SGD"/>
</dbReference>
<dbReference type="GO" id="GO:0006314">
    <property type="term" value="P:intron homing"/>
    <property type="evidence" value="ECO:0000304"/>
    <property type="project" value="SGD"/>
</dbReference>
<dbReference type="GO" id="GO:0006397">
    <property type="term" value="P:mRNA processing"/>
    <property type="evidence" value="ECO:0007669"/>
    <property type="project" value="UniProtKB-KW"/>
</dbReference>
<dbReference type="GO" id="GO:0008380">
    <property type="term" value="P:RNA splicing"/>
    <property type="evidence" value="ECO:0007669"/>
    <property type="project" value="UniProtKB-KW"/>
</dbReference>
<dbReference type="Gene3D" id="3.10.28.10">
    <property type="entry name" value="Homing endonucleases"/>
    <property type="match status" value="2"/>
</dbReference>
<dbReference type="InterPro" id="IPR052500">
    <property type="entry name" value="Chloro/Mito_RNA_Process"/>
</dbReference>
<dbReference type="InterPro" id="IPR027434">
    <property type="entry name" value="Homing_endonucl"/>
</dbReference>
<dbReference type="InterPro" id="IPR004860">
    <property type="entry name" value="LAGLIDADG_dom"/>
</dbReference>
<dbReference type="PANTHER" id="PTHR47539">
    <property type="entry name" value="PENTATRICOPEPTIDE REPEAT-CONTAINING PROTEIN OTP51, CHLOROPLASTIC"/>
    <property type="match status" value="1"/>
</dbReference>
<dbReference type="PANTHER" id="PTHR47539:SF1">
    <property type="entry name" value="PENTATRICOPEPTIDE REPEAT-CONTAINING PROTEIN OTP51, CHLOROPLASTIC"/>
    <property type="match status" value="1"/>
</dbReference>
<dbReference type="Pfam" id="PF03161">
    <property type="entry name" value="LAGLIDADG_2"/>
    <property type="match status" value="1"/>
</dbReference>
<dbReference type="SUPFAM" id="SSF55608">
    <property type="entry name" value="Homing endonucleases"/>
    <property type="match status" value="1"/>
</dbReference>
<sequence>MKNIKKNQVMNLGPNSKLLKEYKSQLIELNIEQFEAGIGLILGDAYIRSRDEGKTYCMQFEWKNKAYMDHVCLLYDQWVLSPPHKKERVNHLGNLVITWGAQTFKHQAFNKLANLFIVNNKKTIPNNLVENYLTPMSLAYWFMDDGGKWDYNKNSTNKSIVLNTQSFTFEEVEYLVKGLRNKFQLNCYVKINKNKPIIYIDSMSYLIFYNLIKPYLIPQMMYKLPNTISSETFLK</sequence>
<geneLocation type="mitochondrion"/>
<protein>
    <recommendedName>
        <fullName>Intron-encoded endonuclease I-SceI</fullName>
        <ecNumber>3.1.-.-</ecNumber>
    </recommendedName>
    <alternativeName>
        <fullName>21S rRNA intron maturase</fullName>
    </alternativeName>
    <alternativeName>
        <fullName>Homing endonuclease omega</fullName>
    </alternativeName>
</protein>
<gene>
    <name type="primary">SCEI</name>
    <name type="synonym">OMEGA</name>
    <name type="synonym">SECY</name>
    <name type="ordered locus">Q0160</name>
</gene>